<accession>A0A5B8Z1N3</accession>
<sequence>MKIVLEEIAMATDKEVLIKEFLKALHEDNAAIFAGAGLSAASGFVNWKGLLKEAADELELDIEKETDLISLAQYFFNKNGRQRLSQLVIDNFSAEAQLNENHRILAQLPIDTYWTTNYDRLIEKSLTDVGKNPDVKIKQSDFALLKPKRDAIVYKMHGDIERASETVLIKDEYEMFHENNQLFSIGLKGDLISKTFLFIGYSFEDPDLEYILSRIRVLMGQDGRNHYCFFRKVNRNQYNHLPKEEGDEKFRYDSIKQELKCADLERYHIKPVLVDKYEDITEILQTILQRYCRSKILISGSAVEYKQFVPDHNTAQMFIHTLSREMVKAGFKIASGFGLGVGSAVINGSLDYVYSTNKRKISDYLILRPFPQYATNGLELMDLWDQYRRDFISDVGCAVFIFGNKEVNGKVVDAGGVRKEFDIAVAQGIKVIPVGATGYMSKTLWEETITNYDKYYSDFPALKADFEFIGDASHNHHEIITRIIKIITALRAGR</sequence>
<evidence type="ECO:0000250" key="1">
    <source>
        <dbReference type="UniProtKB" id="C0MAL8"/>
    </source>
</evidence>
<evidence type="ECO:0000250" key="2">
    <source>
        <dbReference type="UniProtKB" id="J8G6Z1"/>
    </source>
</evidence>
<evidence type="ECO:0000250" key="3">
    <source>
        <dbReference type="UniProtKB" id="Q9WYW0"/>
    </source>
</evidence>
<evidence type="ECO:0000255" key="4">
    <source>
        <dbReference type="PROSITE-ProRule" id="PRU00236"/>
    </source>
</evidence>
<evidence type="ECO:0000269" key="5">
    <source>
    </source>
</evidence>
<evidence type="ECO:0000303" key="6">
    <source>
    </source>
</evidence>
<evidence type="ECO:0000305" key="7"/>
<evidence type="ECO:0000305" key="8">
    <source>
    </source>
</evidence>
<evidence type="ECO:0000312" key="9">
    <source>
        <dbReference type="EMBL" id="QED46885.1"/>
    </source>
</evidence>
<keyword id="KW-0051">Antiviral defense</keyword>
<keyword id="KW-0963">Cytoplasm</keyword>
<keyword id="KW-0378">Hydrolase</keyword>
<keyword id="KW-0520">NAD</keyword>
<keyword id="KW-1185">Reference proteome</keyword>
<organism>
    <name type="scientific">Cytobacillus dafuensis</name>
    <name type="common">Bacillus dafuensis</name>
    <dbReference type="NCBI Taxonomy" id="1742359"/>
    <lineage>
        <taxon>Bacteria</taxon>
        <taxon>Bacillati</taxon>
        <taxon>Bacillota</taxon>
        <taxon>Bacilli</taxon>
        <taxon>Bacillales</taxon>
        <taxon>Bacillaceae</taxon>
        <taxon>Cytobacillus</taxon>
    </lineage>
</organism>
<feature type="chain" id="PRO_0000456258" description="NAD(+) hydrolase ThsA">
    <location>
        <begin position="1"/>
        <end position="494"/>
    </location>
</feature>
<feature type="domain" description="Deacetylase sirtuin-type" evidence="4">
    <location>
        <begin position="11"/>
        <end position="295"/>
    </location>
</feature>
<feature type="region of interest" description="SLOG (STALD) domain, binds 3'cADPR" evidence="2">
    <location>
        <begin position="296"/>
        <end position="494"/>
    </location>
</feature>
<feature type="active site" description="Proton acceptor" evidence="2">
    <location>
        <position position="157"/>
    </location>
</feature>
<feature type="binding site" evidence="3">
    <location>
        <position position="30"/>
    </location>
    <ligand>
        <name>NAD(+)</name>
        <dbReference type="ChEBI" id="CHEBI:57540"/>
    </ligand>
</feature>
<feature type="binding site" evidence="3">
    <location>
        <position position="119"/>
    </location>
    <ligand>
        <name>NAD(+)</name>
        <dbReference type="ChEBI" id="CHEBI:57540"/>
    </ligand>
</feature>
<feature type="binding site" evidence="3">
    <location>
        <position position="157"/>
    </location>
    <ligand>
        <name>NAD(+)</name>
        <dbReference type="ChEBI" id="CHEBI:57540"/>
    </ligand>
</feature>
<feature type="binding site" evidence="2">
    <location>
        <position position="300"/>
    </location>
    <ligand>
        <name>3'cADPR</name>
        <dbReference type="ChEBI" id="CHEBI:194249"/>
        <note>activator</note>
    </ligand>
</feature>
<feature type="binding site" evidence="2">
    <location>
        <position position="301"/>
    </location>
    <ligand>
        <name>3'cADPR</name>
        <dbReference type="ChEBI" id="CHEBI:194249"/>
        <note>activator</note>
    </ligand>
</feature>
<feature type="binding site" evidence="2">
    <location>
        <position position="339"/>
    </location>
    <ligand>
        <name>3'cADPR</name>
        <dbReference type="ChEBI" id="CHEBI:194249"/>
        <note>activator</note>
    </ligand>
</feature>
<feature type="binding site" evidence="2">
    <location>
        <position position="370"/>
    </location>
    <ligand>
        <name>3'cADPR</name>
        <dbReference type="ChEBI" id="CHEBI:194249"/>
        <note>activator</note>
    </ligand>
</feature>
<feature type="binding site" evidence="2">
    <location>
        <position position="388"/>
    </location>
    <ligand>
        <name>3'cADPR</name>
        <dbReference type="ChEBI" id="CHEBI:194249"/>
        <note>activator</note>
    </ligand>
</feature>
<feature type="binding site" evidence="2">
    <location>
        <position position="405"/>
    </location>
    <ligand>
        <name>3'cADPR</name>
        <dbReference type="ChEBI" id="CHEBI:194249"/>
        <note>activator</note>
    </ligand>
</feature>
<feature type="binding site" evidence="2">
    <location>
        <position position="416"/>
    </location>
    <ligand>
        <name>3'cADPR</name>
        <dbReference type="ChEBI" id="CHEBI:194249"/>
        <note>activator</note>
    </ligand>
</feature>
<feature type="binding site" evidence="2">
    <location>
        <position position="420"/>
    </location>
    <ligand>
        <name>3'cADPR</name>
        <dbReference type="ChEBI" id="CHEBI:194249"/>
        <note>activator</note>
    </ligand>
</feature>
<name>THSA_CYTDA</name>
<protein>
    <recommendedName>
        <fullName evidence="6">NAD(+) hydrolase ThsA</fullName>
        <shortName evidence="6">NADase ThsA</shortName>
        <ecNumber evidence="2">3.2.2.5</ecNumber>
    </recommendedName>
    <alternativeName>
        <fullName evidence="6">Thoeris protein ThsA</fullName>
    </alternativeName>
</protein>
<reference evidence="9" key="1">
    <citation type="submission" date="2019-08" db="EMBL/GenBank/DDBJ databases">
        <authorList>
            <person name="Zheng X."/>
        </authorList>
    </citation>
    <scope>NUCLEOTIDE SEQUENCE [LARGE SCALE GENOMIC DNA]</scope>
    <source>
        <strain>KCTC 43120 / FJAT-25496</strain>
    </source>
</reference>
<reference key="2">
    <citation type="journal article" date="2021" name="Nature">
        <title>Antiviral activity of bacterial TIR domains via immune signalling molecules.</title>
        <authorList>
            <person name="Ofir G."/>
            <person name="Herbst E."/>
            <person name="Baroz M."/>
            <person name="Cohen D."/>
            <person name="Millman A."/>
            <person name="Doron S."/>
            <person name="Tal N."/>
            <person name="Malheiro D.B.A."/>
            <person name="Malitsky S."/>
            <person name="Amitai G."/>
            <person name="Sorek R."/>
        </authorList>
    </citation>
    <scope>FUNCTION IN ANTIVIRAL DEFENSE</scope>
    <scope>EXPRESSION IN B.SUBTILIS</scope>
    <source>
        <strain>KCTC 43120 / FJAT-25496</strain>
    </source>
</reference>
<proteinExistence type="evidence at protein level"/>
<gene>
    <name evidence="7" type="primary">thsA</name>
    <name evidence="9" type="ORF">FSZ17_06160</name>
</gene>
<dbReference type="EC" id="3.2.2.5" evidence="2"/>
<dbReference type="EMBL" id="CP042593">
    <property type="protein sequence ID" value="QED46885.1"/>
    <property type="status" value="ALT_INIT"/>
    <property type="molecule type" value="Genomic_DNA"/>
</dbReference>
<dbReference type="RefSeq" id="WP_057775117.1">
    <property type="nucleotide sequence ID" value="NZ_CP042593.1"/>
</dbReference>
<dbReference type="SMR" id="A0A5B8Z1N3"/>
<dbReference type="STRING" id="1742359.GCA_001439625_04135"/>
<dbReference type="KEGG" id="bda:FSZ17_06160"/>
<dbReference type="OrthoDB" id="1688888at2"/>
<dbReference type="Proteomes" id="UP000321555">
    <property type="component" value="Chromosome"/>
</dbReference>
<dbReference type="GO" id="GO:0005737">
    <property type="term" value="C:cytoplasm"/>
    <property type="evidence" value="ECO:0007669"/>
    <property type="project" value="UniProtKB-SubCell"/>
</dbReference>
<dbReference type="GO" id="GO:0016787">
    <property type="term" value="F:hydrolase activity"/>
    <property type="evidence" value="ECO:0007669"/>
    <property type="project" value="UniProtKB-KW"/>
</dbReference>
<dbReference type="GO" id="GO:0051607">
    <property type="term" value="P:defense response to virus"/>
    <property type="evidence" value="ECO:0007669"/>
    <property type="project" value="UniProtKB-KW"/>
</dbReference>
<dbReference type="CDD" id="cd01406">
    <property type="entry name" value="SIR2-like"/>
    <property type="match status" value="1"/>
</dbReference>
<dbReference type="Gene3D" id="3.40.50.1220">
    <property type="entry name" value="TPP-binding domain"/>
    <property type="match status" value="1"/>
</dbReference>
<dbReference type="InterPro" id="IPR029035">
    <property type="entry name" value="DHS-like_NAD/FAD-binding_dom"/>
</dbReference>
<dbReference type="InterPro" id="IPR026590">
    <property type="entry name" value="Ssirtuin_cat_dom"/>
</dbReference>
<dbReference type="InterPro" id="IPR041486">
    <property type="entry name" value="ThsA_STALD"/>
</dbReference>
<dbReference type="Pfam" id="PF13289">
    <property type="entry name" value="SIR2_2"/>
    <property type="match status" value="1"/>
</dbReference>
<dbReference type="Pfam" id="PF18185">
    <property type="entry name" value="STALD"/>
    <property type="match status" value="1"/>
</dbReference>
<dbReference type="SUPFAM" id="SSF52467">
    <property type="entry name" value="DHS-like NAD/FAD-binding domain"/>
    <property type="match status" value="1"/>
</dbReference>
<dbReference type="PROSITE" id="PS50305">
    <property type="entry name" value="SIRTUIN"/>
    <property type="match status" value="1"/>
</dbReference>
<comment type="function">
    <text evidence="5 8">Probable NAD(+) hydrolyzing component (NADase) of the Thoeris antiviral defense system, composed of ThsA, TIR1 (thsB1) and TIR2 (thsB2) (PubMed:34853457). Activated by a signal molecule generated by endogenous TIR1, TIR2 or ThsB from B.cereus. After activation it binds and hydrolyzes NAD(+), leading to cell death and inhibition of phage replication (Probable). Expression of Thoeris in B.subtilis (strain BEST7003) confers resistance to phages phi29, phi3T, SPBeta, SBSphi11, SBSphi13, SBSphiJ, SPO1 and SPR but not SBSphiC. The TIR paralogs confer overlapping resistance to different phages (PubMed:34853457).</text>
</comment>
<comment type="catalytic activity">
    <reaction evidence="2">
        <text>NAD(+) + H2O = ADP-D-ribose + nicotinamide + H(+)</text>
        <dbReference type="Rhea" id="RHEA:16301"/>
        <dbReference type="ChEBI" id="CHEBI:15377"/>
        <dbReference type="ChEBI" id="CHEBI:15378"/>
        <dbReference type="ChEBI" id="CHEBI:17154"/>
        <dbReference type="ChEBI" id="CHEBI:57540"/>
        <dbReference type="ChEBI" id="CHEBI:57967"/>
        <dbReference type="EC" id="3.2.2.5"/>
    </reaction>
    <physiologicalReaction direction="left-to-right" evidence="2">
        <dbReference type="Rhea" id="RHEA:16302"/>
    </physiologicalReaction>
</comment>
<comment type="activity regulation">
    <text evidence="2 8">Probably activated by a signal molecule generated by endogenous ThsB1 and/or ThsB2. Can also be activated by the signal generated by ThsB of B.cereus (PubMed:34853457). The activating molecule might be 3' cyclic ADP-D-ribose (3'cADPR) (By similarity).</text>
</comment>
<comment type="subunit">
    <text evidence="1">Homotetramer.</text>
</comment>
<comment type="subcellular location">
    <subcellularLocation>
        <location evidence="7">Cytoplasm</location>
    </subcellularLocation>
</comment>
<comment type="domain">
    <text evidence="2">Has an N-terminal deacetylase sirtuin-like domain (SIR2, residues 1-295) and a C-terminal SLOG (STALD)-like domain (residues 296-494). The SIR2 domain has NAD(+) hydrolase activity. The SLOG domain binds cyclic ADP-D-ribose (might be 3'cADPR); binding alters the protein conformation, allowing NAD(+) to access the active site.</text>
</comment>
<comment type="similarity">
    <text evidence="7">Belongs to the soluble Thoeris ThsA family.</text>
</comment>
<comment type="sequence caution" evidence="7">
    <conflict type="erroneous initiation">
        <sequence resource="EMBL-CDS" id="QED46885"/>
    </conflict>
    <text>Truncated N-terminus.</text>
</comment>